<organism>
    <name type="scientific">Xanthobacter autotrophicus (strain ATCC BAA-1158 / Py2)</name>
    <dbReference type="NCBI Taxonomy" id="78245"/>
    <lineage>
        <taxon>Bacteria</taxon>
        <taxon>Pseudomonadati</taxon>
        <taxon>Pseudomonadota</taxon>
        <taxon>Alphaproteobacteria</taxon>
        <taxon>Hyphomicrobiales</taxon>
        <taxon>Xanthobacteraceae</taxon>
        <taxon>Xanthobacter</taxon>
    </lineage>
</organism>
<name>RS19_XANP2</name>
<reference key="1">
    <citation type="submission" date="2007-07" db="EMBL/GenBank/DDBJ databases">
        <title>Complete sequence of chromosome of Xanthobacter autotrophicus Py2.</title>
        <authorList>
            <consortium name="US DOE Joint Genome Institute"/>
            <person name="Copeland A."/>
            <person name="Lucas S."/>
            <person name="Lapidus A."/>
            <person name="Barry K."/>
            <person name="Glavina del Rio T."/>
            <person name="Hammon N."/>
            <person name="Israni S."/>
            <person name="Dalin E."/>
            <person name="Tice H."/>
            <person name="Pitluck S."/>
            <person name="Sims D."/>
            <person name="Brettin T."/>
            <person name="Bruce D."/>
            <person name="Detter J.C."/>
            <person name="Han C."/>
            <person name="Tapia R."/>
            <person name="Brainard J."/>
            <person name="Schmutz J."/>
            <person name="Larimer F."/>
            <person name="Land M."/>
            <person name="Hauser L."/>
            <person name="Kyrpides N."/>
            <person name="Kim E."/>
            <person name="Ensigns S.A."/>
            <person name="Richardson P."/>
        </authorList>
    </citation>
    <scope>NUCLEOTIDE SEQUENCE [LARGE SCALE GENOMIC DNA]</scope>
    <source>
        <strain>ATCC BAA-1158 / Py2</strain>
    </source>
</reference>
<comment type="function">
    <text evidence="1">Protein S19 forms a complex with S13 that binds strongly to the 16S ribosomal RNA.</text>
</comment>
<comment type="similarity">
    <text evidence="1">Belongs to the universal ribosomal protein uS19 family.</text>
</comment>
<keyword id="KW-1185">Reference proteome</keyword>
<keyword id="KW-0687">Ribonucleoprotein</keyword>
<keyword id="KW-0689">Ribosomal protein</keyword>
<keyword id="KW-0694">RNA-binding</keyword>
<keyword id="KW-0699">rRNA-binding</keyword>
<protein>
    <recommendedName>
        <fullName evidence="1">Small ribosomal subunit protein uS19</fullName>
    </recommendedName>
    <alternativeName>
        <fullName evidence="2">30S ribosomal protein S19</fullName>
    </alternativeName>
</protein>
<sequence length="92" mass="10410">MTRSVWKGPFVDGYLLKKAEAASGSGRRDVIKIWSRRSTILPQFVGLTFGVYNGHKHVPVNVSEEMIGHKFGEFAPTRTYYGHAADKKSKRR</sequence>
<proteinExistence type="inferred from homology"/>
<evidence type="ECO:0000255" key="1">
    <source>
        <dbReference type="HAMAP-Rule" id="MF_00531"/>
    </source>
</evidence>
<evidence type="ECO:0000305" key="2"/>
<dbReference type="EMBL" id="CP000781">
    <property type="protein sequence ID" value="ABS66928.1"/>
    <property type="molecule type" value="Genomic_DNA"/>
</dbReference>
<dbReference type="SMR" id="A7IFY5"/>
<dbReference type="STRING" id="78245.Xaut_1683"/>
<dbReference type="KEGG" id="xau:Xaut_1683"/>
<dbReference type="eggNOG" id="COG0185">
    <property type="taxonomic scope" value="Bacteria"/>
</dbReference>
<dbReference type="HOGENOM" id="CLU_144911_0_1_5"/>
<dbReference type="OrthoDB" id="9797833at2"/>
<dbReference type="PhylomeDB" id="A7IFY5"/>
<dbReference type="Proteomes" id="UP000002417">
    <property type="component" value="Chromosome"/>
</dbReference>
<dbReference type="GO" id="GO:0005737">
    <property type="term" value="C:cytoplasm"/>
    <property type="evidence" value="ECO:0007669"/>
    <property type="project" value="UniProtKB-ARBA"/>
</dbReference>
<dbReference type="GO" id="GO:0015935">
    <property type="term" value="C:small ribosomal subunit"/>
    <property type="evidence" value="ECO:0007669"/>
    <property type="project" value="InterPro"/>
</dbReference>
<dbReference type="GO" id="GO:0019843">
    <property type="term" value="F:rRNA binding"/>
    <property type="evidence" value="ECO:0007669"/>
    <property type="project" value="UniProtKB-UniRule"/>
</dbReference>
<dbReference type="GO" id="GO:0003735">
    <property type="term" value="F:structural constituent of ribosome"/>
    <property type="evidence" value="ECO:0007669"/>
    <property type="project" value="InterPro"/>
</dbReference>
<dbReference type="GO" id="GO:0000028">
    <property type="term" value="P:ribosomal small subunit assembly"/>
    <property type="evidence" value="ECO:0007669"/>
    <property type="project" value="TreeGrafter"/>
</dbReference>
<dbReference type="GO" id="GO:0006412">
    <property type="term" value="P:translation"/>
    <property type="evidence" value="ECO:0007669"/>
    <property type="project" value="UniProtKB-UniRule"/>
</dbReference>
<dbReference type="FunFam" id="3.30.860.10:FF:000001">
    <property type="entry name" value="30S ribosomal protein S19"/>
    <property type="match status" value="1"/>
</dbReference>
<dbReference type="Gene3D" id="3.30.860.10">
    <property type="entry name" value="30s Ribosomal Protein S19, Chain A"/>
    <property type="match status" value="1"/>
</dbReference>
<dbReference type="HAMAP" id="MF_00531">
    <property type="entry name" value="Ribosomal_uS19"/>
    <property type="match status" value="1"/>
</dbReference>
<dbReference type="InterPro" id="IPR002222">
    <property type="entry name" value="Ribosomal_uS19"/>
</dbReference>
<dbReference type="InterPro" id="IPR005732">
    <property type="entry name" value="Ribosomal_uS19_bac-type"/>
</dbReference>
<dbReference type="InterPro" id="IPR020934">
    <property type="entry name" value="Ribosomal_uS19_CS"/>
</dbReference>
<dbReference type="InterPro" id="IPR023575">
    <property type="entry name" value="Ribosomal_uS19_SF"/>
</dbReference>
<dbReference type="NCBIfam" id="TIGR01050">
    <property type="entry name" value="rpsS_bact"/>
    <property type="match status" value="1"/>
</dbReference>
<dbReference type="PANTHER" id="PTHR11880">
    <property type="entry name" value="RIBOSOMAL PROTEIN S19P FAMILY MEMBER"/>
    <property type="match status" value="1"/>
</dbReference>
<dbReference type="PANTHER" id="PTHR11880:SF8">
    <property type="entry name" value="SMALL RIBOSOMAL SUBUNIT PROTEIN US19M"/>
    <property type="match status" value="1"/>
</dbReference>
<dbReference type="Pfam" id="PF00203">
    <property type="entry name" value="Ribosomal_S19"/>
    <property type="match status" value="1"/>
</dbReference>
<dbReference type="PIRSF" id="PIRSF002144">
    <property type="entry name" value="Ribosomal_S19"/>
    <property type="match status" value="1"/>
</dbReference>
<dbReference type="PRINTS" id="PR00975">
    <property type="entry name" value="RIBOSOMALS19"/>
</dbReference>
<dbReference type="SUPFAM" id="SSF54570">
    <property type="entry name" value="Ribosomal protein S19"/>
    <property type="match status" value="1"/>
</dbReference>
<dbReference type="PROSITE" id="PS00323">
    <property type="entry name" value="RIBOSOMAL_S19"/>
    <property type="match status" value="1"/>
</dbReference>
<feature type="chain" id="PRO_1000128060" description="Small ribosomal subunit protein uS19">
    <location>
        <begin position="1"/>
        <end position="92"/>
    </location>
</feature>
<accession>A7IFY5</accession>
<gene>
    <name evidence="1" type="primary">rpsS</name>
    <name type="ordered locus">Xaut_1683</name>
</gene>